<comment type="catalytic activity">
    <reaction evidence="1">
        <text>tRNA(Lys) + L-lysine + ATP = L-lysyl-tRNA(Lys) + AMP + diphosphate</text>
        <dbReference type="Rhea" id="RHEA:20792"/>
        <dbReference type="Rhea" id="RHEA-COMP:9696"/>
        <dbReference type="Rhea" id="RHEA-COMP:9697"/>
        <dbReference type="ChEBI" id="CHEBI:30616"/>
        <dbReference type="ChEBI" id="CHEBI:32551"/>
        <dbReference type="ChEBI" id="CHEBI:33019"/>
        <dbReference type="ChEBI" id="CHEBI:78442"/>
        <dbReference type="ChEBI" id="CHEBI:78529"/>
        <dbReference type="ChEBI" id="CHEBI:456215"/>
        <dbReference type="EC" id="6.1.1.6"/>
    </reaction>
</comment>
<comment type="cofactor">
    <cofactor evidence="1">
        <name>Mg(2+)</name>
        <dbReference type="ChEBI" id="CHEBI:18420"/>
    </cofactor>
    <text evidence="1">Binds 3 Mg(2+) ions per subunit.</text>
</comment>
<comment type="subunit">
    <text evidence="1">Homodimer.</text>
</comment>
<comment type="subcellular location">
    <subcellularLocation>
        <location evidence="1">Cytoplasm</location>
    </subcellularLocation>
</comment>
<comment type="similarity">
    <text evidence="1">Belongs to the class-II aminoacyl-tRNA synthetase family.</text>
</comment>
<keyword id="KW-0030">Aminoacyl-tRNA synthetase</keyword>
<keyword id="KW-0067">ATP-binding</keyword>
<keyword id="KW-0963">Cytoplasm</keyword>
<keyword id="KW-0436">Ligase</keyword>
<keyword id="KW-0460">Magnesium</keyword>
<keyword id="KW-0479">Metal-binding</keyword>
<keyword id="KW-0547">Nucleotide-binding</keyword>
<keyword id="KW-0648">Protein biosynthesis</keyword>
<accession>A5UPG6</accession>
<reference key="1">
    <citation type="submission" date="2007-04" db="EMBL/GenBank/DDBJ databases">
        <title>Complete sequence of Roseiflexus sp. RS-1.</title>
        <authorList>
            <consortium name="US DOE Joint Genome Institute"/>
            <person name="Copeland A."/>
            <person name="Lucas S."/>
            <person name="Lapidus A."/>
            <person name="Barry K."/>
            <person name="Detter J.C."/>
            <person name="Glavina del Rio T."/>
            <person name="Hammon N."/>
            <person name="Israni S."/>
            <person name="Dalin E."/>
            <person name="Tice H."/>
            <person name="Pitluck S."/>
            <person name="Chertkov O."/>
            <person name="Brettin T."/>
            <person name="Bruce D."/>
            <person name="Han C."/>
            <person name="Schmutz J."/>
            <person name="Larimer F."/>
            <person name="Land M."/>
            <person name="Hauser L."/>
            <person name="Kyrpides N."/>
            <person name="Mikhailova N."/>
            <person name="Bryant D.A."/>
            <person name="Richardson P."/>
        </authorList>
    </citation>
    <scope>NUCLEOTIDE SEQUENCE [LARGE SCALE GENOMIC DNA]</scope>
    <source>
        <strain>RS-1</strain>
    </source>
</reference>
<sequence>MELNELQQQRLAKLERLRAAGIDPYPPRTRRTHTIGFVLASFDQLMERGEQVTVAGRIVGARRILGKLAFAHIEDESGRIQIWLSRGDIGDEWFDRFRDDLDTFDIVEATGTLRRTQRGEPSVFVERLGVLAKSLNPPPEKWHGLSDIEERHRQRYLDLIVNPEVRDVFRTRAKIVSTMRRFLDERGFLEVETPTLQPIYGGASARPFITHHNQLKQDLYLRIAVELYLKRLIVGGFERVYEISKVFRNEGVDRTHNPEFTMMECYQAYADYNDMMRLVEDLYRTLALEVAGSTTIVFQGHTIDFGPAWQRVSIPTAIAARTGIDILELTELEPLQRAIRAVGLKVDLKPSWGKQVDEIFSVYVQPELIQPTFVIDHPVALSPLAKRRPDQPLLVERFEPIVAGMEVGNAFTELNDPLDQEQRFLEQGRAYDAGDDEAQQMDIDFLNALMYGMPPTGGLGIGIDRTVMLFTDQPSIREVILFPHMRPRD</sequence>
<dbReference type="EC" id="6.1.1.6" evidence="1"/>
<dbReference type="EMBL" id="CP000686">
    <property type="protein sequence ID" value="ABQ88519.1"/>
    <property type="molecule type" value="Genomic_DNA"/>
</dbReference>
<dbReference type="RefSeq" id="WP_011954879.1">
    <property type="nucleotide sequence ID" value="NC_009523.1"/>
</dbReference>
<dbReference type="SMR" id="A5UPG6"/>
<dbReference type="STRING" id="357808.RoseRS_0078"/>
<dbReference type="KEGG" id="rrs:RoseRS_0078"/>
<dbReference type="eggNOG" id="COG1190">
    <property type="taxonomic scope" value="Bacteria"/>
</dbReference>
<dbReference type="HOGENOM" id="CLU_008255_6_0_0"/>
<dbReference type="OrthoDB" id="9802326at2"/>
<dbReference type="Proteomes" id="UP000006554">
    <property type="component" value="Chromosome"/>
</dbReference>
<dbReference type="GO" id="GO:0005829">
    <property type="term" value="C:cytosol"/>
    <property type="evidence" value="ECO:0007669"/>
    <property type="project" value="TreeGrafter"/>
</dbReference>
<dbReference type="GO" id="GO:0005524">
    <property type="term" value="F:ATP binding"/>
    <property type="evidence" value="ECO:0007669"/>
    <property type="project" value="UniProtKB-UniRule"/>
</dbReference>
<dbReference type="GO" id="GO:0004824">
    <property type="term" value="F:lysine-tRNA ligase activity"/>
    <property type="evidence" value="ECO:0007669"/>
    <property type="project" value="UniProtKB-UniRule"/>
</dbReference>
<dbReference type="GO" id="GO:0000287">
    <property type="term" value="F:magnesium ion binding"/>
    <property type="evidence" value="ECO:0007669"/>
    <property type="project" value="UniProtKB-UniRule"/>
</dbReference>
<dbReference type="GO" id="GO:0000049">
    <property type="term" value="F:tRNA binding"/>
    <property type="evidence" value="ECO:0007669"/>
    <property type="project" value="TreeGrafter"/>
</dbReference>
<dbReference type="GO" id="GO:0006430">
    <property type="term" value="P:lysyl-tRNA aminoacylation"/>
    <property type="evidence" value="ECO:0007669"/>
    <property type="project" value="UniProtKB-UniRule"/>
</dbReference>
<dbReference type="CDD" id="cd00775">
    <property type="entry name" value="LysRS_core"/>
    <property type="match status" value="1"/>
</dbReference>
<dbReference type="CDD" id="cd04322">
    <property type="entry name" value="LysRS_N"/>
    <property type="match status" value="1"/>
</dbReference>
<dbReference type="Gene3D" id="3.30.930.10">
    <property type="entry name" value="Bira Bifunctional Protein, Domain 2"/>
    <property type="match status" value="1"/>
</dbReference>
<dbReference type="Gene3D" id="2.40.50.140">
    <property type="entry name" value="Nucleic acid-binding proteins"/>
    <property type="match status" value="1"/>
</dbReference>
<dbReference type="HAMAP" id="MF_00252">
    <property type="entry name" value="Lys_tRNA_synth_class2"/>
    <property type="match status" value="1"/>
</dbReference>
<dbReference type="InterPro" id="IPR004364">
    <property type="entry name" value="Aa-tRNA-synt_II"/>
</dbReference>
<dbReference type="InterPro" id="IPR006195">
    <property type="entry name" value="aa-tRNA-synth_II"/>
</dbReference>
<dbReference type="InterPro" id="IPR045864">
    <property type="entry name" value="aa-tRNA-synth_II/BPL/LPL"/>
</dbReference>
<dbReference type="InterPro" id="IPR002313">
    <property type="entry name" value="Lys-tRNA-ligase_II"/>
</dbReference>
<dbReference type="InterPro" id="IPR044136">
    <property type="entry name" value="Lys-tRNA-ligase_II_N"/>
</dbReference>
<dbReference type="InterPro" id="IPR018149">
    <property type="entry name" value="Lys-tRNA-synth_II_C"/>
</dbReference>
<dbReference type="InterPro" id="IPR012340">
    <property type="entry name" value="NA-bd_OB-fold"/>
</dbReference>
<dbReference type="InterPro" id="IPR004365">
    <property type="entry name" value="NA-bd_OB_tRNA"/>
</dbReference>
<dbReference type="NCBIfam" id="TIGR00499">
    <property type="entry name" value="lysS_bact"/>
    <property type="match status" value="1"/>
</dbReference>
<dbReference type="NCBIfam" id="NF001756">
    <property type="entry name" value="PRK00484.1"/>
    <property type="match status" value="1"/>
</dbReference>
<dbReference type="PANTHER" id="PTHR42918:SF15">
    <property type="entry name" value="LYSINE--TRNA LIGASE, CHLOROPLASTIC_MITOCHONDRIAL"/>
    <property type="match status" value="1"/>
</dbReference>
<dbReference type="PANTHER" id="PTHR42918">
    <property type="entry name" value="LYSYL-TRNA SYNTHETASE"/>
    <property type="match status" value="1"/>
</dbReference>
<dbReference type="Pfam" id="PF00152">
    <property type="entry name" value="tRNA-synt_2"/>
    <property type="match status" value="1"/>
</dbReference>
<dbReference type="Pfam" id="PF01336">
    <property type="entry name" value="tRNA_anti-codon"/>
    <property type="match status" value="1"/>
</dbReference>
<dbReference type="PRINTS" id="PR00982">
    <property type="entry name" value="TRNASYNTHLYS"/>
</dbReference>
<dbReference type="SUPFAM" id="SSF55681">
    <property type="entry name" value="Class II aaRS and biotin synthetases"/>
    <property type="match status" value="1"/>
</dbReference>
<dbReference type="SUPFAM" id="SSF50249">
    <property type="entry name" value="Nucleic acid-binding proteins"/>
    <property type="match status" value="1"/>
</dbReference>
<dbReference type="PROSITE" id="PS50862">
    <property type="entry name" value="AA_TRNA_LIGASE_II"/>
    <property type="match status" value="1"/>
</dbReference>
<protein>
    <recommendedName>
        <fullName evidence="1">Lysine--tRNA ligase</fullName>
        <ecNumber evidence="1">6.1.1.6</ecNumber>
    </recommendedName>
    <alternativeName>
        <fullName evidence="1">Lysyl-tRNA synthetase</fullName>
        <shortName evidence="1">LysRS</shortName>
    </alternativeName>
</protein>
<gene>
    <name evidence="1" type="primary">lysS</name>
    <name type="ordered locus">RoseRS_0078</name>
</gene>
<feature type="chain" id="PRO_1000071872" description="Lysine--tRNA ligase">
    <location>
        <begin position="1"/>
        <end position="489"/>
    </location>
</feature>
<feature type="binding site" evidence="1">
    <location>
        <position position="399"/>
    </location>
    <ligand>
        <name>Mg(2+)</name>
        <dbReference type="ChEBI" id="CHEBI:18420"/>
        <label>1</label>
    </ligand>
</feature>
<feature type="binding site" evidence="1">
    <location>
        <position position="406"/>
    </location>
    <ligand>
        <name>Mg(2+)</name>
        <dbReference type="ChEBI" id="CHEBI:18420"/>
        <label>1</label>
    </ligand>
</feature>
<feature type="binding site" evidence="1">
    <location>
        <position position="406"/>
    </location>
    <ligand>
        <name>Mg(2+)</name>
        <dbReference type="ChEBI" id="CHEBI:18420"/>
        <label>2</label>
    </ligand>
</feature>
<proteinExistence type="inferred from homology"/>
<organism>
    <name type="scientific">Roseiflexus sp. (strain RS-1)</name>
    <dbReference type="NCBI Taxonomy" id="357808"/>
    <lineage>
        <taxon>Bacteria</taxon>
        <taxon>Bacillati</taxon>
        <taxon>Chloroflexota</taxon>
        <taxon>Chloroflexia</taxon>
        <taxon>Chloroflexales</taxon>
        <taxon>Roseiflexineae</taxon>
        <taxon>Roseiflexaceae</taxon>
        <taxon>Roseiflexus</taxon>
    </lineage>
</organism>
<evidence type="ECO:0000255" key="1">
    <source>
        <dbReference type="HAMAP-Rule" id="MF_00252"/>
    </source>
</evidence>
<name>SYK_ROSS1</name>